<proteinExistence type="inferred from homology"/>
<dbReference type="EMBL" id="AL356332">
    <property type="protein sequence ID" value="CAB92053.1"/>
    <property type="molecule type" value="Genomic_DNA"/>
</dbReference>
<dbReference type="EMBL" id="CP002688">
    <property type="protein sequence ID" value="AED91496.1"/>
    <property type="molecule type" value="Genomic_DNA"/>
</dbReference>
<dbReference type="PIR" id="T50016">
    <property type="entry name" value="T50016"/>
</dbReference>
<dbReference type="RefSeq" id="NP_196574.1">
    <property type="nucleotide sequence ID" value="NM_121050.2"/>
</dbReference>
<dbReference type="SMR" id="Q9LX16"/>
<dbReference type="FunCoup" id="Q9LX16">
    <property type="interactions" value="364"/>
</dbReference>
<dbReference type="STRING" id="3702.Q9LX16"/>
<dbReference type="iPTMnet" id="Q9LX16"/>
<dbReference type="PaxDb" id="3702-AT5G10120.1"/>
<dbReference type="EnsemblPlants" id="AT5G10120.1">
    <property type="protein sequence ID" value="AT5G10120.1"/>
    <property type="gene ID" value="AT5G10120"/>
</dbReference>
<dbReference type="GeneID" id="830876"/>
<dbReference type="Gramene" id="AT5G10120.1">
    <property type="protein sequence ID" value="AT5G10120.1"/>
    <property type="gene ID" value="AT5G10120"/>
</dbReference>
<dbReference type="KEGG" id="ath:AT5G10120"/>
<dbReference type="Araport" id="AT5G10120"/>
<dbReference type="TAIR" id="AT5G10120"/>
<dbReference type="eggNOG" id="ENOG502QWMS">
    <property type="taxonomic scope" value="Eukaryota"/>
</dbReference>
<dbReference type="HOGENOM" id="CLU_027306_3_0_1"/>
<dbReference type="InParanoid" id="Q9LX16"/>
<dbReference type="OMA" id="ALMQHCM"/>
<dbReference type="PhylomeDB" id="Q9LX16"/>
<dbReference type="PRO" id="PR:Q9LX16"/>
<dbReference type="Proteomes" id="UP000006548">
    <property type="component" value="Chromosome 5"/>
</dbReference>
<dbReference type="ExpressionAtlas" id="Q9LX16">
    <property type="expression patterns" value="baseline and differential"/>
</dbReference>
<dbReference type="GO" id="GO:0005634">
    <property type="term" value="C:nucleus"/>
    <property type="evidence" value="ECO:0007669"/>
    <property type="project" value="UniProtKB-SubCell"/>
</dbReference>
<dbReference type="GO" id="GO:0003700">
    <property type="term" value="F:DNA-binding transcription factor activity"/>
    <property type="evidence" value="ECO:0000250"/>
    <property type="project" value="TAIR"/>
</dbReference>
<dbReference type="GO" id="GO:0009873">
    <property type="term" value="P:ethylene-activated signaling pathway"/>
    <property type="evidence" value="ECO:0007669"/>
    <property type="project" value="UniProtKB-KW"/>
</dbReference>
<dbReference type="GO" id="GO:0006355">
    <property type="term" value="P:regulation of DNA-templated transcription"/>
    <property type="evidence" value="ECO:0000304"/>
    <property type="project" value="TAIR"/>
</dbReference>
<dbReference type="FunFam" id="1.10.3180.10:FF:000003">
    <property type="entry name" value="Ethylene insensitive 3 family protein"/>
    <property type="match status" value="1"/>
</dbReference>
<dbReference type="FunFam" id="1.10.3180.10:FF:000001">
    <property type="entry name" value="Ethylene insensitive 3-like 1"/>
    <property type="match status" value="1"/>
</dbReference>
<dbReference type="Gene3D" id="1.10.3180.10">
    <property type="entry name" value="DNA-binding domain of EIN3-like"/>
    <property type="match status" value="2"/>
</dbReference>
<dbReference type="InterPro" id="IPR006957">
    <property type="entry name" value="EIN3"/>
</dbReference>
<dbReference type="InterPro" id="IPR047091">
    <property type="entry name" value="EIN3-like_DNA-bd"/>
</dbReference>
<dbReference type="InterPro" id="IPR023278">
    <property type="entry name" value="Ethylene_insens-like_DNA-bd"/>
</dbReference>
<dbReference type="PANTHER" id="PTHR33305">
    <property type="entry name" value="ETHYLENE INSENSITIVE 3-LIKE 2 PROTEIN"/>
    <property type="match status" value="1"/>
</dbReference>
<dbReference type="PANTHER" id="PTHR33305:SF42">
    <property type="entry name" value="ETHYLENE INSENSITIVE 3-LIKE 4 PROTEIN-RELATED"/>
    <property type="match status" value="1"/>
</dbReference>
<dbReference type="Pfam" id="PF04873">
    <property type="entry name" value="EIN3_DNA-bd"/>
    <property type="match status" value="1"/>
</dbReference>
<dbReference type="SUPFAM" id="SSF116768">
    <property type="entry name" value="DNA-binding domain of EIN3-like"/>
    <property type="match status" value="1"/>
</dbReference>
<comment type="function">
    <text evidence="1">Putative transcription factor that may be involved in the ethylene response pathway.</text>
</comment>
<comment type="subcellular location">
    <subcellularLocation>
        <location evidence="1">Nucleus</location>
    </subcellularLocation>
</comment>
<comment type="similarity">
    <text evidence="3">Belongs to the EIN3 family.</text>
</comment>
<reference key="1">
    <citation type="journal article" date="2000" name="Nature">
        <title>Sequence and analysis of chromosome 5 of the plant Arabidopsis thaliana.</title>
        <authorList>
            <person name="Tabata S."/>
            <person name="Kaneko T."/>
            <person name="Nakamura Y."/>
            <person name="Kotani H."/>
            <person name="Kato T."/>
            <person name="Asamizu E."/>
            <person name="Miyajima N."/>
            <person name="Sasamoto S."/>
            <person name="Kimura T."/>
            <person name="Hosouchi T."/>
            <person name="Kawashima K."/>
            <person name="Kohara M."/>
            <person name="Matsumoto M."/>
            <person name="Matsuno A."/>
            <person name="Muraki A."/>
            <person name="Nakayama S."/>
            <person name="Nakazaki N."/>
            <person name="Naruo K."/>
            <person name="Okumura S."/>
            <person name="Shinpo S."/>
            <person name="Takeuchi C."/>
            <person name="Wada T."/>
            <person name="Watanabe A."/>
            <person name="Yamada M."/>
            <person name="Yasuda M."/>
            <person name="Sato S."/>
            <person name="de la Bastide M."/>
            <person name="Huang E."/>
            <person name="Spiegel L."/>
            <person name="Gnoj L."/>
            <person name="O'Shaughnessy A."/>
            <person name="Preston R."/>
            <person name="Habermann K."/>
            <person name="Murray J."/>
            <person name="Johnson D."/>
            <person name="Rohlfing T."/>
            <person name="Nelson J."/>
            <person name="Stoneking T."/>
            <person name="Pepin K."/>
            <person name="Spieth J."/>
            <person name="Sekhon M."/>
            <person name="Armstrong J."/>
            <person name="Becker M."/>
            <person name="Belter E."/>
            <person name="Cordum H."/>
            <person name="Cordes M."/>
            <person name="Courtney L."/>
            <person name="Courtney W."/>
            <person name="Dante M."/>
            <person name="Du H."/>
            <person name="Edwards J."/>
            <person name="Fryman J."/>
            <person name="Haakensen B."/>
            <person name="Lamar E."/>
            <person name="Latreille P."/>
            <person name="Leonard S."/>
            <person name="Meyer R."/>
            <person name="Mulvaney E."/>
            <person name="Ozersky P."/>
            <person name="Riley A."/>
            <person name="Strowmatt C."/>
            <person name="Wagner-McPherson C."/>
            <person name="Wollam A."/>
            <person name="Yoakum M."/>
            <person name="Bell M."/>
            <person name="Dedhia N."/>
            <person name="Parnell L."/>
            <person name="Shah R."/>
            <person name="Rodriguez M."/>
            <person name="Hoon See L."/>
            <person name="Vil D."/>
            <person name="Baker J."/>
            <person name="Kirchoff K."/>
            <person name="Toth K."/>
            <person name="King L."/>
            <person name="Bahret A."/>
            <person name="Miller B."/>
            <person name="Marra M.A."/>
            <person name="Martienssen R."/>
            <person name="McCombie W.R."/>
            <person name="Wilson R.K."/>
            <person name="Murphy G."/>
            <person name="Bancroft I."/>
            <person name="Volckaert G."/>
            <person name="Wambutt R."/>
            <person name="Duesterhoeft A."/>
            <person name="Stiekema W."/>
            <person name="Pohl T."/>
            <person name="Entian K.-D."/>
            <person name="Terryn N."/>
            <person name="Hartley N."/>
            <person name="Bent E."/>
            <person name="Johnson S."/>
            <person name="Langham S.-A."/>
            <person name="McCullagh B."/>
            <person name="Robben J."/>
            <person name="Grymonprez B."/>
            <person name="Zimmermann W."/>
            <person name="Ramsperger U."/>
            <person name="Wedler H."/>
            <person name="Balke K."/>
            <person name="Wedler E."/>
            <person name="Peters S."/>
            <person name="van Staveren M."/>
            <person name="Dirkse W."/>
            <person name="Mooijman P."/>
            <person name="Klein Lankhorst R."/>
            <person name="Weitzenegger T."/>
            <person name="Bothe G."/>
            <person name="Rose M."/>
            <person name="Hauf J."/>
            <person name="Berneiser S."/>
            <person name="Hempel S."/>
            <person name="Feldpausch M."/>
            <person name="Lamberth S."/>
            <person name="Villarroel R."/>
            <person name="Gielen J."/>
            <person name="Ardiles W."/>
            <person name="Bents O."/>
            <person name="Lemcke K."/>
            <person name="Kolesov G."/>
            <person name="Mayer K.F.X."/>
            <person name="Rudd S."/>
            <person name="Schoof H."/>
            <person name="Schueller C."/>
            <person name="Zaccaria P."/>
            <person name="Mewes H.-W."/>
            <person name="Bevan M."/>
            <person name="Fransz P.F."/>
        </authorList>
    </citation>
    <scope>NUCLEOTIDE SEQUENCE [LARGE SCALE GENOMIC DNA]</scope>
    <source>
        <strain>cv. Columbia</strain>
    </source>
</reference>
<reference key="2">
    <citation type="journal article" date="2017" name="Plant J.">
        <title>Araport11: a complete reannotation of the Arabidopsis thaliana reference genome.</title>
        <authorList>
            <person name="Cheng C.Y."/>
            <person name="Krishnakumar V."/>
            <person name="Chan A.P."/>
            <person name="Thibaud-Nissen F."/>
            <person name="Schobel S."/>
            <person name="Town C.D."/>
        </authorList>
    </citation>
    <scope>GENOME REANNOTATION</scope>
    <source>
        <strain>cv. Columbia</strain>
    </source>
</reference>
<keyword id="KW-0936">Ethylene signaling pathway</keyword>
<keyword id="KW-0539">Nucleus</keyword>
<keyword id="KW-1185">Reference proteome</keyword>
<keyword id="KW-0804">Transcription</keyword>
<keyword id="KW-0805">Transcription regulation</keyword>
<name>EIL4_ARATH</name>
<organism>
    <name type="scientific">Arabidopsis thaliana</name>
    <name type="common">Mouse-ear cress</name>
    <dbReference type="NCBI Taxonomy" id="3702"/>
    <lineage>
        <taxon>Eukaryota</taxon>
        <taxon>Viridiplantae</taxon>
        <taxon>Streptophyta</taxon>
        <taxon>Embryophyta</taxon>
        <taxon>Tracheophyta</taxon>
        <taxon>Spermatophyta</taxon>
        <taxon>Magnoliopsida</taxon>
        <taxon>eudicotyledons</taxon>
        <taxon>Gunneridae</taxon>
        <taxon>Pentapetalae</taxon>
        <taxon>rosids</taxon>
        <taxon>malvids</taxon>
        <taxon>Brassicales</taxon>
        <taxon>Brassicaceae</taxon>
        <taxon>Camelineae</taxon>
        <taxon>Arabidopsis</taxon>
    </lineage>
</organism>
<feature type="chain" id="PRO_0000113502" description="Putative ETHYLENE INSENSITIVE 3-like 4 protein">
    <location>
        <begin position="1"/>
        <end position="471"/>
    </location>
</feature>
<feature type="region of interest" description="Disordered" evidence="2">
    <location>
        <begin position="280"/>
        <end position="316"/>
    </location>
</feature>
<feature type="compositionally biased region" description="Polar residues" evidence="2">
    <location>
        <begin position="304"/>
        <end position="316"/>
    </location>
</feature>
<protein>
    <recommendedName>
        <fullName>Putative ETHYLENE INSENSITIVE 3-like 4 protein</fullName>
    </recommendedName>
</protein>
<evidence type="ECO:0000250" key="1"/>
<evidence type="ECO:0000256" key="2">
    <source>
        <dbReference type="SAM" id="MobiDB-lite"/>
    </source>
</evidence>
<evidence type="ECO:0000305" key="3"/>
<accession>Q9LX16</accession>
<sequence>MVEVEELEPLSPMDDEEEEISYDDLKRRMWKDRNLMEKKLKQQKRHSNDVVSFTTHRAEASRRKKMARSQDSVLKYMMKIMEVCKAKGFVYGIVPEKGKPITGSSDSLRRWWKENVQFDQNAPDAITDYLALAAAAAAAELIDKSSSSSSLLHMLQELQDTTLGSLLSALMQHCMPPQRRFPLEKGIAPPWWPTGTELWWGEQGAAHEHGAPPYRKPHDLRKSWKVSVLAAVIKHMSPNLGRVRRLARQSKSLQDKMMAKETDTWSRVLNQEEALLNIKDLKISEDQDDQESSGSKRKSESMEPSKSVYTCQNSSCPKSDVSFGFGDKNSRTGHEIQCLYGSNQEPSQSGEYTSSLLETVPSIVTNSTSEDDYYNVSSRALDKRDDDDHSINGNWMEYFWLEKMQQEFHCSRRFEDDEGTGTDFDQLTESDRSDNVNLNQLTKSDRSDNVNRSAFSVWDMGCEDKDIYMFD</sequence>
<gene>
    <name type="primary">EIL4</name>
    <name type="ordered locus">At5g10120</name>
    <name type="ORF">T31P16_110</name>
</gene>